<feature type="signal peptide" evidence="2">
    <location>
        <begin position="1"/>
        <end position="34"/>
    </location>
</feature>
<feature type="chain" id="PRO_0000436194" description="Protein wntless homolog" evidence="15">
    <location>
        <begin position="35"/>
        <end position="549"/>
    </location>
</feature>
<feature type="topological domain" description="Lumenal" evidence="15">
    <location>
        <begin position="36"/>
        <end position="236"/>
    </location>
</feature>
<feature type="transmembrane region" description="Helical; Name=1" evidence="2">
    <location>
        <begin position="237"/>
        <end position="257"/>
    </location>
</feature>
<feature type="topological domain" description="Cytoplasmic" evidence="15">
    <location>
        <begin position="258"/>
        <end position="275"/>
    </location>
</feature>
<feature type="transmembrane region" description="Helical; Name=2" evidence="2">
    <location>
        <begin position="276"/>
        <end position="296"/>
    </location>
</feature>
<feature type="topological domain" description="Lumenal" evidence="15">
    <location>
        <begin position="297"/>
        <end position="310"/>
    </location>
</feature>
<feature type="transmembrane region" description="Helical; Name=3" evidence="2">
    <location>
        <begin position="311"/>
        <end position="331"/>
    </location>
</feature>
<feature type="topological domain" description="Cytoplasmic" evidence="15">
    <location>
        <begin position="332"/>
        <end position="345"/>
    </location>
</feature>
<feature type="transmembrane region" description="Helical; Name=4" evidence="2">
    <location>
        <begin position="346"/>
        <end position="366"/>
    </location>
</feature>
<feature type="topological domain" description="Lumenal" evidence="15">
    <location>
        <begin position="367"/>
        <end position="383"/>
    </location>
</feature>
<feature type="transmembrane region" description="Helical; Name=5" evidence="2">
    <location>
        <begin position="384"/>
        <end position="404"/>
    </location>
</feature>
<feature type="topological domain" description="Cytoplasmic" evidence="15">
    <location>
        <begin position="405"/>
        <end position="439"/>
    </location>
</feature>
<feature type="transmembrane region" description="Helical; Name=6" evidence="2">
    <location>
        <begin position="440"/>
        <end position="460"/>
    </location>
</feature>
<feature type="topological domain" description="Lumenal" evidence="15">
    <location>
        <begin position="461"/>
        <end position="483"/>
    </location>
</feature>
<feature type="transmembrane region" description="Helical; Name=7" evidence="2">
    <location>
        <begin position="484"/>
        <end position="504"/>
    </location>
</feature>
<feature type="topological domain" description="Cytoplasmic" evidence="15">
    <location>
        <begin position="505"/>
        <end position="549"/>
    </location>
</feature>
<feature type="region of interest" description="Disordered" evidence="3">
    <location>
        <begin position="524"/>
        <end position="549"/>
    </location>
</feature>
<feature type="compositionally biased region" description="Polar residues" evidence="3">
    <location>
        <begin position="530"/>
        <end position="549"/>
    </location>
</feature>
<feature type="mutagenesis site" description="In ga62." evidence="6">
    <original>H</original>
    <variation>Y</variation>
    <location>
        <position position="329"/>
    </location>
</feature>
<accession>Q7YWX7</accession>
<gene>
    <name evidence="17" type="primary">mig-14</name>
    <name evidence="17" type="synonym">let-553</name>
    <name evidence="17" type="synonym">mom-3</name>
    <name evidence="17" type="synonym">pvl-2</name>
    <name evidence="17" type="ORF">R06B9.6</name>
</gene>
<evidence type="ECO:0000250" key="1">
    <source>
        <dbReference type="UniProtKB" id="Q5T9L3"/>
    </source>
</evidence>
<evidence type="ECO:0000255" key="2"/>
<evidence type="ECO:0000256" key="3">
    <source>
        <dbReference type="SAM" id="MobiDB-lite"/>
    </source>
</evidence>
<evidence type="ECO:0000269" key="4">
    <source>
    </source>
</evidence>
<evidence type="ECO:0000269" key="5">
    <source>
    </source>
</evidence>
<evidence type="ECO:0000269" key="6">
    <source>
    </source>
</evidence>
<evidence type="ECO:0000269" key="7">
    <source>
    </source>
</evidence>
<evidence type="ECO:0000269" key="8">
    <source>
    </source>
</evidence>
<evidence type="ECO:0000269" key="9">
    <source>
    </source>
</evidence>
<evidence type="ECO:0000269" key="10">
    <source>
    </source>
</evidence>
<evidence type="ECO:0000269" key="11">
    <source>
    </source>
</evidence>
<evidence type="ECO:0000269" key="12">
    <source>
    </source>
</evidence>
<evidence type="ECO:0000269" key="13">
    <source>
    </source>
</evidence>
<evidence type="ECO:0000269" key="14">
    <source>
    </source>
</evidence>
<evidence type="ECO:0000305" key="15"/>
<evidence type="ECO:0000312" key="16">
    <source>
        <dbReference type="Proteomes" id="UP000001940"/>
    </source>
</evidence>
<evidence type="ECO:0000312" key="17">
    <source>
        <dbReference type="WormBase" id="R06B9.6"/>
    </source>
</evidence>
<keyword id="KW-1003">Cell membrane</keyword>
<keyword id="KW-0217">Developmental protein</keyword>
<keyword id="KW-0967">Endosome</keyword>
<keyword id="KW-0333">Golgi apparatus</keyword>
<keyword id="KW-0472">Membrane</keyword>
<keyword id="KW-1185">Reference proteome</keyword>
<keyword id="KW-0732">Signal</keyword>
<keyword id="KW-0812">Transmembrane</keyword>
<keyword id="KW-1133">Transmembrane helix</keyword>
<keyword id="KW-0879">Wnt signaling pathway</keyword>
<dbReference type="EMBL" id="BX284602">
    <property type="protein sequence ID" value="CAE17879.1"/>
    <property type="molecule type" value="Genomic_DNA"/>
</dbReference>
<dbReference type="RefSeq" id="NP_001022275.1">
    <property type="nucleotide sequence ID" value="NM_001027104.4"/>
</dbReference>
<dbReference type="SMR" id="Q7YWX7"/>
<dbReference type="FunCoup" id="Q7YWX7">
    <property type="interactions" value="1466"/>
</dbReference>
<dbReference type="IntAct" id="Q7YWX7">
    <property type="interactions" value="5"/>
</dbReference>
<dbReference type="MINT" id="Q7YWX7"/>
<dbReference type="STRING" id="6239.R06B9.6.1"/>
<dbReference type="PaxDb" id="6239-R06B9.6"/>
<dbReference type="PeptideAtlas" id="Q7YWX7"/>
<dbReference type="EnsemblMetazoa" id="R06B9.6.1">
    <property type="protein sequence ID" value="R06B9.6.1"/>
    <property type="gene ID" value="WBGene00003246"/>
</dbReference>
<dbReference type="GeneID" id="175020"/>
<dbReference type="KEGG" id="cel:CELE_R06B9.6"/>
<dbReference type="UCSC" id="R06B9.6">
    <property type="organism name" value="c. elegans"/>
</dbReference>
<dbReference type="AGR" id="WB:WBGene00003246"/>
<dbReference type="CTD" id="175020"/>
<dbReference type="WormBase" id="R06B9.6">
    <property type="protein sequence ID" value="CE34955"/>
    <property type="gene ID" value="WBGene00003246"/>
    <property type="gene designation" value="mig-14"/>
</dbReference>
<dbReference type="eggNOG" id="ENOG502QSE2">
    <property type="taxonomic scope" value="Eukaryota"/>
</dbReference>
<dbReference type="GeneTree" id="ENSGT00390000005897"/>
<dbReference type="HOGENOM" id="CLU_022911_0_0_1"/>
<dbReference type="InParanoid" id="Q7YWX7"/>
<dbReference type="OMA" id="GQWKWDE"/>
<dbReference type="OrthoDB" id="5804250at2759"/>
<dbReference type="PhylomeDB" id="Q7YWX7"/>
<dbReference type="Reactome" id="R-CEL-3238698">
    <property type="pathway name" value="WNT ligand biogenesis and trafficking"/>
</dbReference>
<dbReference type="PRO" id="PR:Q7YWX7"/>
<dbReference type="Proteomes" id="UP000001940">
    <property type="component" value="Chromosome II"/>
</dbReference>
<dbReference type="Bgee" id="WBGene00003246">
    <property type="expression patterns" value="Expressed in embryo and 4 other cell types or tissues"/>
</dbReference>
<dbReference type="GO" id="GO:0016323">
    <property type="term" value="C:basolateral plasma membrane"/>
    <property type="evidence" value="ECO:0000314"/>
    <property type="project" value="WormBase"/>
</dbReference>
<dbReference type="GO" id="GO:0071944">
    <property type="term" value="C:cell periphery"/>
    <property type="evidence" value="ECO:0000314"/>
    <property type="project" value="WormBase"/>
</dbReference>
<dbReference type="GO" id="GO:0031410">
    <property type="term" value="C:cytoplasmic vesicle"/>
    <property type="evidence" value="ECO:0000314"/>
    <property type="project" value="WormBase"/>
</dbReference>
<dbReference type="GO" id="GO:0031901">
    <property type="term" value="C:early endosome membrane"/>
    <property type="evidence" value="ECO:0007669"/>
    <property type="project" value="UniProtKB-SubCell"/>
</dbReference>
<dbReference type="GO" id="GO:0012505">
    <property type="term" value="C:endomembrane system"/>
    <property type="evidence" value="ECO:0000318"/>
    <property type="project" value="GO_Central"/>
</dbReference>
<dbReference type="GO" id="GO:0005789">
    <property type="term" value="C:endoplasmic reticulum membrane"/>
    <property type="evidence" value="ECO:0000250"/>
    <property type="project" value="WormBase"/>
</dbReference>
<dbReference type="GO" id="GO:0005794">
    <property type="term" value="C:Golgi apparatus"/>
    <property type="evidence" value="ECO:0000250"/>
    <property type="project" value="WormBase"/>
</dbReference>
<dbReference type="GO" id="GO:0000139">
    <property type="term" value="C:Golgi membrane"/>
    <property type="evidence" value="ECO:0007669"/>
    <property type="project" value="UniProtKB-SubCell"/>
</dbReference>
<dbReference type="GO" id="GO:0031902">
    <property type="term" value="C:late endosome membrane"/>
    <property type="evidence" value="ECO:0007669"/>
    <property type="project" value="UniProtKB-SubCell"/>
</dbReference>
<dbReference type="GO" id="GO:0031090">
    <property type="term" value="C:organelle membrane"/>
    <property type="evidence" value="ECO:0000318"/>
    <property type="project" value="GO_Central"/>
</dbReference>
<dbReference type="GO" id="GO:0005886">
    <property type="term" value="C:plasma membrane"/>
    <property type="evidence" value="ECO:0000314"/>
    <property type="project" value="WormBase"/>
</dbReference>
<dbReference type="GO" id="GO:0017147">
    <property type="term" value="F:Wnt-protein binding"/>
    <property type="evidence" value="ECO:0000250"/>
    <property type="project" value="WormBase"/>
</dbReference>
<dbReference type="GO" id="GO:0060070">
    <property type="term" value="P:canonical Wnt signaling pathway"/>
    <property type="evidence" value="ECO:0000315"/>
    <property type="project" value="WormBase"/>
</dbReference>
<dbReference type="GO" id="GO:0048557">
    <property type="term" value="P:embryonic digestive tract morphogenesis"/>
    <property type="evidence" value="ECO:0000316"/>
    <property type="project" value="UniProtKB"/>
</dbReference>
<dbReference type="GO" id="GO:0001714">
    <property type="term" value="P:endodermal cell fate specification"/>
    <property type="evidence" value="ECO:0000315"/>
    <property type="project" value="WormBase"/>
</dbReference>
<dbReference type="GO" id="GO:0000132">
    <property type="term" value="P:establishment of mitotic spindle orientation"/>
    <property type="evidence" value="ECO:0000315"/>
    <property type="project" value="WormBase"/>
</dbReference>
<dbReference type="GO" id="GO:0006886">
    <property type="term" value="P:intracellular protein transport"/>
    <property type="evidence" value="ECO:0000318"/>
    <property type="project" value="GO_Central"/>
</dbReference>
<dbReference type="GO" id="GO:0070986">
    <property type="term" value="P:left/right axis specification"/>
    <property type="evidence" value="ECO:0000316"/>
    <property type="project" value="UniProtKB"/>
</dbReference>
<dbReference type="GO" id="GO:0034514">
    <property type="term" value="P:mitochondrial unfolded protein response"/>
    <property type="evidence" value="ECO:0000314"/>
    <property type="project" value="WormBase"/>
</dbReference>
<dbReference type="GO" id="GO:0061357">
    <property type="term" value="P:positive regulation of Wnt protein secretion"/>
    <property type="evidence" value="ECO:0000250"/>
    <property type="project" value="ParkinsonsUK-UCL"/>
</dbReference>
<dbReference type="GO" id="GO:0030177">
    <property type="term" value="P:positive regulation of Wnt signaling pathway"/>
    <property type="evidence" value="ECO:0000250"/>
    <property type="project" value="ParkinsonsUK-UCL"/>
</dbReference>
<dbReference type="GO" id="GO:0010623">
    <property type="term" value="P:programmed cell death involved in cell development"/>
    <property type="evidence" value="ECO:0000315"/>
    <property type="project" value="UniProtKB"/>
</dbReference>
<dbReference type="GO" id="GO:0030334">
    <property type="term" value="P:regulation of cell migration"/>
    <property type="evidence" value="ECO:0000315"/>
    <property type="project" value="WormBase"/>
</dbReference>
<dbReference type="GO" id="GO:0040025">
    <property type="term" value="P:vulval development"/>
    <property type="evidence" value="ECO:0000315"/>
    <property type="project" value="WormBase"/>
</dbReference>
<dbReference type="GO" id="GO:0061355">
    <property type="term" value="P:Wnt protein secretion"/>
    <property type="evidence" value="ECO:0000318"/>
    <property type="project" value="GO_Central"/>
</dbReference>
<dbReference type="GO" id="GO:0060069">
    <property type="term" value="P:Wnt signaling pathway, regulating spindle positioning"/>
    <property type="evidence" value="ECO:0000315"/>
    <property type="project" value="WormBase"/>
</dbReference>
<dbReference type="InterPro" id="IPR047843">
    <property type="entry name" value="WLS-like_TM"/>
</dbReference>
<dbReference type="InterPro" id="IPR053936">
    <property type="entry name" value="WLS_GOLD"/>
</dbReference>
<dbReference type="InterPro" id="IPR009551">
    <property type="entry name" value="Wntless"/>
</dbReference>
<dbReference type="PANTHER" id="PTHR13449">
    <property type="entry name" value="INTEGRAL MEMBRANE PROTEIN GPR177"/>
    <property type="match status" value="1"/>
</dbReference>
<dbReference type="PANTHER" id="PTHR13449:SF2">
    <property type="entry name" value="PROTEIN WNTLESS HOMOLOG"/>
    <property type="match status" value="1"/>
</dbReference>
<dbReference type="Pfam" id="PF06664">
    <property type="entry name" value="WLS-like_TM"/>
    <property type="match status" value="1"/>
</dbReference>
<dbReference type="Pfam" id="PF21883">
    <property type="entry name" value="WLS_GOLD"/>
    <property type="match status" value="1"/>
</dbReference>
<proteinExistence type="evidence at protein level"/>
<comment type="function">
    <text evidence="4 5 6 7 8 9 11 13 14">Probable sorting receptor which regulates endocytosis and secretion of the wnt ligand egl-20 (PubMed:18160346, PubMed:18160347, PubMed:21076391). Recycling of mig-14 from the plasma membrane to the Golgi apparatus by the retromer complex is essential for its function (PubMed:18160346, PubMed:18160347, PubMed:21076391). Its endosomal trafficking is regulated by its association with sorting nexin snx-3 on early endosomes and the mtm-6/mtm-9 myotubularin complex (PubMed:21076391). Required in embryonic development for endoderm specification and the correct positioning and orientation of the mitotic spindles and division planes in blastomere cells (PubMed:16678095, PubMed:9288749). Functions during vulval development, playing a role in vulval precursor cell fate specification (PubMed:11063687, PubMed:18077322). During development, specifically regulates the migration of HSN neurons, the left Q neuroblast (QL) and its descendants and the distal tip cells of the gonads (PubMed:10388818, PubMed:11063687, PubMed:18160346, PubMed:18160347, PubMed:8898225). Positioning of Q neuroblasts may be both dependent and independent of hox gene mab-5 (PubMed:8898225). Involved in establishing ALM and PLM neuronal cell polarity (PubMed:18160346).</text>
</comment>
<comment type="subcellular location">
    <subcellularLocation>
        <location evidence="8 9">Cell membrane</location>
        <topology evidence="2">Multi-pass membrane protein</topology>
    </subcellularLocation>
    <subcellularLocation>
        <location evidence="10 11">Early endosome membrane</location>
        <topology evidence="2">Multi-pass membrane protein</topology>
    </subcellularLocation>
    <subcellularLocation>
        <location evidence="9 10">Golgi apparatus membrane</location>
        <topology evidence="2">Multi-pass membrane protein</topology>
    </subcellularLocation>
    <subcellularLocation>
        <location evidence="12">Basal cell membrane</location>
        <topology evidence="2">Multi-pass membrane protein</topology>
    </subcellularLocation>
    <subcellularLocation>
        <location evidence="12">Late endosome membrane</location>
        <topology evidence="2">Multi-pass membrane protein</topology>
    </subcellularLocation>
    <text evidence="9 11 12">Traffics between endosomal cell membrane and the Golgi apparatus membrane and the cell membrane to mediate wnt/egl-20 secretion (PubMed:18160347, PubMed:21076391). Co-localizes with snx-3 on intracellular punctae and early endosomes to facilitate recycling and wnt/egl-20 secretion (PubMed:21076391). Localizes to the basolateral cell membrane of intestine cells, but not the apical cell membrane (PubMed:26115433).</text>
</comment>
<comment type="tissue specificity">
    <text evidence="9">Expressed in the tail hypodermis, stomatointestinal muscle, the mesoblast cell M and its descendants, CAN neurons, the developing vulva, the pharynx and the pharyngeal intestinal valve.</text>
</comment>
<comment type="developmental stage">
    <text evidence="9">Expressed in posterior regions at the comma stage of embryogenesis, during larval development and in adults.</text>
</comment>
<comment type="disruption phenotype">
    <text evidence="6 9 14">Embryonic lethal with severely defective embryonic morphogenesis with no endoderm and excess mesoderm (PubMed:18160347, PubMed:9288749). In addition, embryos have defective mitotic spindle orientation in the 8-cell stage ABar blastomere (PubMed:16678095, PubMed:9288749).</text>
</comment>
<comment type="similarity">
    <text evidence="15">Belongs to the wntless family.</text>
</comment>
<sequence>MAGGAVIENLSNRKLFVIFAGLLVIQIMFFLIGAWYAPSPSSYMEFEMITCRDETKGLSGEWIHRDNCQQISELSEYTPSSFDLREIVFIAKMPHTRDGIELEYSPWFQFLLGVLHVDVEYSEHFKYVAHAPLELEVRMGYRDKESKKNEWKELVTSNVTRILECTIAEDEKKAGGTYDCDMLDLFELGSSSYPFYLINIRIPINQQACQFDNKSANCQIGKLTGLRLIEIHQNGGFTLVWLWTKTFMTPVVAICLWWYYNRINQLARNPLLLERAILLLGLSLVILDFPIEWISLTYRIPFLLLISDLRQGLFYTVLFSFWLIFAGEHLIDDNTRNNLKSYRFNLSFIITASLGLLIYDLIERGIQLYDPFYSVWSSPTGSQIAYFAIFISAISTVAYFIFLFFKIARVWSTIKSKRSAQIYQTSENRRLKVEGVIYRFKFLMLFTLLCSAFTIAAYFMKQYGEAQLHGDEARDGFLTGSTSAFFTGAFGMCNIYVLLLLAMYAPSHKHYRGASQLIDENDDDEIMEDPSNQHTESNAMTTFLKPSTD</sequence>
<protein>
    <recommendedName>
        <fullName evidence="1">Protein wntless homolog</fullName>
    </recommendedName>
    <alternativeName>
        <fullName evidence="17">Abnormal cell migration protein 14</fullName>
    </alternativeName>
</protein>
<reference evidence="16" key="1">
    <citation type="journal article" date="1998" name="Science">
        <title>Genome sequence of the nematode C. elegans: a platform for investigating biology.</title>
        <authorList>
            <consortium name="The C. elegans sequencing consortium"/>
        </authorList>
    </citation>
    <scope>NUCLEOTIDE SEQUENCE [LARGE SCALE GENOMIC DNA]</scope>
    <source>
        <strain evidence="16">Bristol N2</strain>
    </source>
</reference>
<reference evidence="15" key="2">
    <citation type="journal article" date="1996" name="Development">
        <title>Neuronal cell migration in C. elegans: regulation of Hox gene expression and cell position.</title>
        <authorList>
            <person name="Harris J."/>
            <person name="Honigberg L."/>
            <person name="Robinson N."/>
            <person name="Kenyon C."/>
        </authorList>
    </citation>
    <scope>FUNCTION</scope>
</reference>
<reference evidence="15" key="3">
    <citation type="journal article" date="1997" name="Cell">
        <title>Wnt signaling polarizes an early C. elegans blastomere to distinguish endoderm from mesoderm.</title>
        <authorList>
            <person name="Thorpe C.J."/>
            <person name="Schlesinger A."/>
            <person name="Carter J.C."/>
            <person name="Bowerman B."/>
        </authorList>
    </citation>
    <scope>FUNCTION</scope>
    <scope>DISRUPTION PHENOTYPE</scope>
</reference>
<reference evidence="15" key="4">
    <citation type="journal article" date="1999" name="Genetics">
        <title>Mutations affecting symmetrical migration of distal tip cells in Caenorhabditis elegans.</title>
        <authorList>
            <person name="Nishiwaki K."/>
        </authorList>
    </citation>
    <scope>FUNCTION</scope>
</reference>
<reference evidence="15" key="5">
    <citation type="journal article" date="2000" name="Genetics">
        <title>Protruding vulva mutants identify novel loci and Wnt signaling factors that function during Caenorhabditis elegans vulva development.</title>
        <authorList>
            <person name="Eisenmann D.M."/>
            <person name="Kim S.K."/>
        </authorList>
    </citation>
    <scope>FUNCTION</scope>
</reference>
<reference evidence="15" key="6">
    <citation type="journal article" date="2006" name="Cell">
        <title>Wntless, a conserved membrane protein dedicated to the secretion of Wnt proteins from signaling cells.</title>
        <authorList>
            <person name="Baenziger C."/>
            <person name="Soldini D."/>
            <person name="Schuett C."/>
            <person name="Zipperlen P."/>
            <person name="Hausmann G."/>
            <person name="Basler K."/>
        </authorList>
    </citation>
    <scope>FUNCTION</scope>
    <scope>DISRUPTION PHENOTYPE</scope>
    <scope>MUTAGENESIS OF HIS-329</scope>
</reference>
<reference evidence="15" key="7">
    <citation type="journal article" date="2007" name="Proc. Natl. Acad. Sci. U.S.A.">
        <title>Wnt signal from multiple tissues and lin-3/EGF signal from the gonad maintain vulval precursor cell competence in Caenorhabditis elegans.</title>
        <authorList>
            <person name="Myers T.R."/>
            <person name="Greenwald I."/>
        </authorList>
    </citation>
    <scope>FUNCTION</scope>
</reference>
<reference evidence="15" key="8">
    <citation type="journal article" date="2008" name="Dev. Cell">
        <title>C. elegans AP-2 and retromer control Wnt signaling by regulating mig-14/Wntless.</title>
        <authorList>
            <person name="Pan C.L."/>
            <person name="Baum P.D."/>
            <person name="Gu M."/>
            <person name="Jorgensen E.M."/>
            <person name="Clark S.G."/>
            <person name="Garriga G."/>
        </authorList>
    </citation>
    <scope>FUNCTION</scope>
    <scope>SUBCELLULAR LOCATION</scope>
</reference>
<reference evidence="15" key="9">
    <citation type="journal article" date="2008" name="Dev. Cell">
        <title>Wnt signaling requires retromer-dependent recycling of MIG-14/Wntless in Wnt-producing cells.</title>
        <authorList>
            <person name="Yang P.T."/>
            <person name="Lorenowicz M.J."/>
            <person name="Silhankova M."/>
            <person name="Coudreuse D.Y."/>
            <person name="Betist M.C."/>
            <person name="Korswagen H.C."/>
        </authorList>
    </citation>
    <scope>FUNCTION</scope>
    <scope>SUBCELLULAR LOCATION</scope>
    <scope>TISSUE SPECIFICITY</scope>
    <scope>DEVELOPMENTAL STAGE</scope>
    <scope>DISRUPTION PHENOTYPE</scope>
</reference>
<reference evidence="15" key="10">
    <citation type="journal article" date="2009" name="EMBO J.">
        <title>Regulation of endosomal clathrin and retromer-mediated endosome to Golgi retrograde transport by the J-domain protein RME-8.</title>
        <authorList>
            <person name="Shi A."/>
            <person name="Sun L."/>
            <person name="Banerjee R."/>
            <person name="Tobin M."/>
            <person name="Zhang Y."/>
            <person name="Grant B.D."/>
        </authorList>
    </citation>
    <scope>SUBCELLULAR LOCATION</scope>
</reference>
<reference evidence="15" key="11">
    <citation type="journal article" date="2010" name="EMBO J.">
        <title>Wnt signalling requires MTM-6 and MTM-9 myotubularin lipid-phosphatase function in Wnt-producing cells.</title>
        <authorList>
            <person name="Silhankova M."/>
            <person name="Port F."/>
            <person name="Harterink M."/>
            <person name="Basler K."/>
            <person name="Korswagen H.C."/>
        </authorList>
    </citation>
    <scope>FUNCTION</scope>
    <scope>SUBCELLULAR LOCATION</scope>
</reference>
<reference key="12">
    <citation type="journal article" date="2015" name="PLoS ONE">
        <title>Serum- and Glucocorticoid-Inducible Kinase-1 (SGK-1) Plays a Role in Membrane Trafficking in Caenorhabditis elegans.</title>
        <authorList>
            <person name="Zhu M."/>
            <person name="Wu G."/>
            <person name="Li Y.X."/>
            <person name="Stevens J.K."/>
            <person name="Fan C.X."/>
            <person name="Spang A."/>
            <person name="Dong M.Q."/>
        </authorList>
    </citation>
    <scope>SUBCELLULAR LOCATION</scope>
</reference>
<reference key="13">
    <citation type="journal article" date="2016" name="PLoS ONE">
        <title>Correction: Serum- and Glucocorticoid-Inducible Kinase-1 (SGK-1) Plays a Role in Membrane Trafficking in Caenorhabditis elegans.</title>
        <authorList>
            <person name="Zhu M."/>
            <person name="Wu G."/>
            <person name="Li Y.X."/>
            <person name="Stevens J.K."/>
            <person name="Fan C.X."/>
            <person name="Spang A."/>
            <person name="Dong M.Q."/>
        </authorList>
    </citation>
    <scope>ERRATUM OF PUBMED:26115433</scope>
</reference>
<name>WLS_CAEEL</name>
<organism evidence="16">
    <name type="scientific">Caenorhabditis elegans</name>
    <dbReference type="NCBI Taxonomy" id="6239"/>
    <lineage>
        <taxon>Eukaryota</taxon>
        <taxon>Metazoa</taxon>
        <taxon>Ecdysozoa</taxon>
        <taxon>Nematoda</taxon>
        <taxon>Chromadorea</taxon>
        <taxon>Rhabditida</taxon>
        <taxon>Rhabditina</taxon>
        <taxon>Rhabditomorpha</taxon>
        <taxon>Rhabditoidea</taxon>
        <taxon>Rhabditidae</taxon>
        <taxon>Peloderinae</taxon>
        <taxon>Caenorhabditis</taxon>
    </lineage>
</organism>